<organism>
    <name type="scientific">Sulfurisphaera tokodaii (strain DSM 16993 / JCM 10545 / NBRC 100140 / 7)</name>
    <name type="common">Sulfolobus tokodaii</name>
    <dbReference type="NCBI Taxonomy" id="273063"/>
    <lineage>
        <taxon>Archaea</taxon>
        <taxon>Thermoproteota</taxon>
        <taxon>Thermoprotei</taxon>
        <taxon>Sulfolobales</taxon>
        <taxon>Sulfolobaceae</taxon>
        <taxon>Sulfurisphaera</taxon>
    </lineage>
</organism>
<feature type="chain" id="PRO_0000236287" description="Ribonuclease HII">
    <location>
        <begin position="1"/>
        <end position="208"/>
    </location>
</feature>
<feature type="domain" description="RNase H type-2" evidence="2">
    <location>
        <begin position="1"/>
        <end position="205"/>
    </location>
</feature>
<feature type="binding site" evidence="1">
    <location>
        <position position="7"/>
    </location>
    <ligand>
        <name>a divalent metal cation</name>
        <dbReference type="ChEBI" id="CHEBI:60240"/>
    </ligand>
</feature>
<feature type="binding site" evidence="1">
    <location>
        <position position="8"/>
    </location>
    <ligand>
        <name>a divalent metal cation</name>
        <dbReference type="ChEBI" id="CHEBI:60240"/>
    </ligand>
</feature>
<feature type="binding site" evidence="1">
    <location>
        <position position="104"/>
    </location>
    <ligand>
        <name>a divalent metal cation</name>
        <dbReference type="ChEBI" id="CHEBI:60240"/>
    </ligand>
</feature>
<protein>
    <recommendedName>
        <fullName evidence="1">Ribonuclease HII</fullName>
        <shortName evidence="1">RNase HII</shortName>
        <ecNumber evidence="1">3.1.26.4</ecNumber>
    </recommendedName>
</protein>
<proteinExistence type="inferred from homology"/>
<dbReference type="EC" id="3.1.26.4" evidence="1"/>
<dbReference type="EMBL" id="BA000023">
    <property type="protein sequence ID" value="BAK54319.1"/>
    <property type="molecule type" value="Genomic_DNA"/>
</dbReference>
<dbReference type="RefSeq" id="WP_010978497.1">
    <property type="nucleotide sequence ID" value="NC_003106.2"/>
</dbReference>
<dbReference type="SMR" id="Q974Z3"/>
<dbReference type="STRING" id="273063.STK_05190"/>
<dbReference type="GeneID" id="1458464"/>
<dbReference type="KEGG" id="sto:STK_05190"/>
<dbReference type="PATRIC" id="fig|273063.9.peg.597"/>
<dbReference type="eggNOG" id="arCOG04121">
    <property type="taxonomic scope" value="Archaea"/>
</dbReference>
<dbReference type="OrthoDB" id="33866at2157"/>
<dbReference type="Proteomes" id="UP000001015">
    <property type="component" value="Chromosome"/>
</dbReference>
<dbReference type="GO" id="GO:0005737">
    <property type="term" value="C:cytoplasm"/>
    <property type="evidence" value="ECO:0007669"/>
    <property type="project" value="UniProtKB-SubCell"/>
</dbReference>
<dbReference type="GO" id="GO:0032299">
    <property type="term" value="C:ribonuclease H2 complex"/>
    <property type="evidence" value="ECO:0007669"/>
    <property type="project" value="TreeGrafter"/>
</dbReference>
<dbReference type="GO" id="GO:0030145">
    <property type="term" value="F:manganese ion binding"/>
    <property type="evidence" value="ECO:0007669"/>
    <property type="project" value="UniProtKB-UniRule"/>
</dbReference>
<dbReference type="GO" id="GO:0003723">
    <property type="term" value="F:RNA binding"/>
    <property type="evidence" value="ECO:0007669"/>
    <property type="project" value="InterPro"/>
</dbReference>
<dbReference type="GO" id="GO:0004523">
    <property type="term" value="F:RNA-DNA hybrid ribonuclease activity"/>
    <property type="evidence" value="ECO:0007669"/>
    <property type="project" value="UniProtKB-UniRule"/>
</dbReference>
<dbReference type="GO" id="GO:0043137">
    <property type="term" value="P:DNA replication, removal of RNA primer"/>
    <property type="evidence" value="ECO:0007669"/>
    <property type="project" value="TreeGrafter"/>
</dbReference>
<dbReference type="GO" id="GO:0006298">
    <property type="term" value="P:mismatch repair"/>
    <property type="evidence" value="ECO:0007669"/>
    <property type="project" value="TreeGrafter"/>
</dbReference>
<dbReference type="CDD" id="cd07180">
    <property type="entry name" value="RNase_HII_archaea_like"/>
    <property type="match status" value="1"/>
</dbReference>
<dbReference type="FunFam" id="1.10.10.460:FF:000001">
    <property type="entry name" value="Ribonuclease"/>
    <property type="match status" value="1"/>
</dbReference>
<dbReference type="Gene3D" id="3.30.420.10">
    <property type="entry name" value="Ribonuclease H-like superfamily/Ribonuclease H"/>
    <property type="match status" value="1"/>
</dbReference>
<dbReference type="Gene3D" id="1.10.10.460">
    <property type="entry name" value="Ribonuclease hii. Domain 2"/>
    <property type="match status" value="1"/>
</dbReference>
<dbReference type="HAMAP" id="MF_00052_A">
    <property type="entry name" value="RNase_HII_A"/>
    <property type="match status" value="1"/>
</dbReference>
<dbReference type="InterPro" id="IPR004649">
    <property type="entry name" value="RNase_H2_suA"/>
</dbReference>
<dbReference type="InterPro" id="IPR001352">
    <property type="entry name" value="RNase_HII/HIII"/>
</dbReference>
<dbReference type="InterPro" id="IPR024567">
    <property type="entry name" value="RNase_HII/HIII_dom"/>
</dbReference>
<dbReference type="InterPro" id="IPR020787">
    <property type="entry name" value="RNase_HII_arc"/>
</dbReference>
<dbReference type="InterPro" id="IPR023160">
    <property type="entry name" value="RNase_HII_hlx-loop-hlx_cap_dom"/>
</dbReference>
<dbReference type="InterPro" id="IPR012337">
    <property type="entry name" value="RNaseH-like_sf"/>
</dbReference>
<dbReference type="InterPro" id="IPR036397">
    <property type="entry name" value="RNaseH_sf"/>
</dbReference>
<dbReference type="NCBIfam" id="TIGR00729">
    <property type="entry name" value="ribonuclease HII"/>
    <property type="match status" value="1"/>
</dbReference>
<dbReference type="PANTHER" id="PTHR10954:SF23">
    <property type="entry name" value="RIBONUCLEASE"/>
    <property type="match status" value="1"/>
</dbReference>
<dbReference type="PANTHER" id="PTHR10954">
    <property type="entry name" value="RIBONUCLEASE H2 SUBUNIT A"/>
    <property type="match status" value="1"/>
</dbReference>
<dbReference type="Pfam" id="PF01351">
    <property type="entry name" value="RNase_HII"/>
    <property type="match status" value="1"/>
</dbReference>
<dbReference type="SUPFAM" id="SSF53098">
    <property type="entry name" value="Ribonuclease H-like"/>
    <property type="match status" value="1"/>
</dbReference>
<dbReference type="PROSITE" id="PS51975">
    <property type="entry name" value="RNASE_H_2"/>
    <property type="match status" value="1"/>
</dbReference>
<accession>Q974Z3</accession>
<accession>F9VN22</accession>
<gene>
    <name evidence="1" type="primary">rnhB</name>
    <name type="ordered locus">STK_05190</name>
</gene>
<name>RNH2_SULTO</name>
<sequence length="208" mass="23619">MIVVGIDEAGRGSLIGPMIVAGVAIKNDRLKFLKNIGVKDSKQLTRNRREKLFDIICSYSEGFTIVKVSPEEIDSENLNELTYKAMIKIIYSLVEFKPIRISIDKVGNTKVVEQEIIKLGMEPNIVTNADVYFVEASAASIIAKVIRDNIIDTLKSKYGDFGSGYPSDPKTVNWVKNVYKEYLTPPPIIRRSWKILQEIAPNYYIRKW</sequence>
<reference key="1">
    <citation type="journal article" date="2001" name="DNA Res.">
        <title>Complete genome sequence of an aerobic thermoacidophilic Crenarchaeon, Sulfolobus tokodaii strain7.</title>
        <authorList>
            <person name="Kawarabayasi Y."/>
            <person name="Hino Y."/>
            <person name="Horikawa H."/>
            <person name="Jin-no K."/>
            <person name="Takahashi M."/>
            <person name="Sekine M."/>
            <person name="Baba S."/>
            <person name="Ankai A."/>
            <person name="Kosugi H."/>
            <person name="Hosoyama A."/>
            <person name="Fukui S."/>
            <person name="Nagai Y."/>
            <person name="Nishijima K."/>
            <person name="Otsuka R."/>
            <person name="Nakazawa H."/>
            <person name="Takamiya M."/>
            <person name="Kato Y."/>
            <person name="Yoshizawa T."/>
            <person name="Tanaka T."/>
            <person name="Kudoh Y."/>
            <person name="Yamazaki J."/>
            <person name="Kushida N."/>
            <person name="Oguchi A."/>
            <person name="Aoki K."/>
            <person name="Masuda S."/>
            <person name="Yanagii M."/>
            <person name="Nishimura M."/>
            <person name="Yamagishi A."/>
            <person name="Oshima T."/>
            <person name="Kikuchi H."/>
        </authorList>
    </citation>
    <scope>NUCLEOTIDE SEQUENCE [LARGE SCALE GENOMIC DNA]</scope>
    <source>
        <strain>DSM 16993 / JCM 10545 / NBRC 100140 / 7</strain>
    </source>
</reference>
<comment type="function">
    <text evidence="1">Endonuclease that specifically degrades the RNA of RNA-DNA hybrids.</text>
</comment>
<comment type="catalytic activity">
    <reaction evidence="1">
        <text>Endonucleolytic cleavage to 5'-phosphomonoester.</text>
        <dbReference type="EC" id="3.1.26.4"/>
    </reaction>
</comment>
<comment type="cofactor">
    <cofactor evidence="1">
        <name>Mn(2+)</name>
        <dbReference type="ChEBI" id="CHEBI:29035"/>
    </cofactor>
    <cofactor evidence="1">
        <name>Mg(2+)</name>
        <dbReference type="ChEBI" id="CHEBI:18420"/>
    </cofactor>
    <text evidence="1">Manganese or magnesium. Binds 1 divalent metal ion per monomer in the absence of substrate. May bind a second metal ion after substrate binding.</text>
</comment>
<comment type="subcellular location">
    <subcellularLocation>
        <location evidence="1">Cytoplasm</location>
    </subcellularLocation>
</comment>
<comment type="similarity">
    <text evidence="1">Belongs to the RNase HII family.</text>
</comment>
<evidence type="ECO:0000255" key="1">
    <source>
        <dbReference type="HAMAP-Rule" id="MF_00052"/>
    </source>
</evidence>
<evidence type="ECO:0000255" key="2">
    <source>
        <dbReference type="PROSITE-ProRule" id="PRU01319"/>
    </source>
</evidence>
<keyword id="KW-0963">Cytoplasm</keyword>
<keyword id="KW-0255">Endonuclease</keyword>
<keyword id="KW-0378">Hydrolase</keyword>
<keyword id="KW-0464">Manganese</keyword>
<keyword id="KW-0479">Metal-binding</keyword>
<keyword id="KW-0540">Nuclease</keyword>
<keyword id="KW-1185">Reference proteome</keyword>